<reference key="1">
    <citation type="submission" date="2005-09" db="EMBL/GenBank/DDBJ databases">
        <title>The chloroplast genome of mulberry: structural features and comparative analysis.</title>
        <authorList>
            <person name="Ravi V."/>
            <person name="Khurana J.P."/>
            <person name="Tyagi A.K."/>
            <person name="Khurana P."/>
        </authorList>
    </citation>
    <scope>NUCLEOTIDE SEQUENCE [LARGE SCALE GENOMIC DNA]</scope>
    <source>
        <strain>cv. K2</strain>
    </source>
</reference>
<feature type="chain" id="PRO_0000275711" description="Cytochrome b559 subunit alpha">
    <location>
        <begin position="1"/>
        <end position="83"/>
    </location>
</feature>
<feature type="transmembrane region" description="Helical" evidence="1">
    <location>
        <begin position="21"/>
        <end position="35"/>
    </location>
</feature>
<feature type="binding site" description="axial binding residue" evidence="1">
    <location>
        <position position="23"/>
    </location>
    <ligand>
        <name>heme</name>
        <dbReference type="ChEBI" id="CHEBI:30413"/>
        <note>ligand shared with beta subunit</note>
    </ligand>
    <ligandPart>
        <name>Fe</name>
        <dbReference type="ChEBI" id="CHEBI:18248"/>
    </ligandPart>
</feature>
<evidence type="ECO:0000255" key="1">
    <source>
        <dbReference type="HAMAP-Rule" id="MF_00642"/>
    </source>
</evidence>
<name>PSBE_MORIN</name>
<comment type="function">
    <text evidence="1">This b-type cytochrome is tightly associated with the reaction center of photosystem II (PSII). PSII is a light-driven water:plastoquinone oxidoreductase that uses light energy to abstract electrons from H(2)O, generating O(2) and a proton gradient subsequently used for ATP formation. It consists of a core antenna complex that captures photons, and an electron transfer chain that converts photonic excitation into a charge separation.</text>
</comment>
<comment type="cofactor">
    <cofactor evidence="1">
        <name>heme b</name>
        <dbReference type="ChEBI" id="CHEBI:60344"/>
    </cofactor>
    <text evidence="1">With its partner (PsbF) binds heme. PSII binds additional chlorophylls, carotenoids and specific lipids.</text>
</comment>
<comment type="subunit">
    <text evidence="1">Heterodimer of an alpha subunit and a beta subunit. PSII is composed of 1 copy each of membrane proteins PsbA, PsbB, PsbC, PsbD, PsbE, PsbF, PsbH, PsbI, PsbJ, PsbK, PsbL, PsbM, PsbT, PsbX, PsbY, PsbZ, Psb30/Ycf12, at least 3 peripheral proteins of the oxygen-evolving complex and a large number of cofactors. It forms dimeric complexes.</text>
</comment>
<comment type="subcellular location">
    <subcellularLocation>
        <location evidence="1">Plastid</location>
        <location evidence="1">Chloroplast thylakoid membrane</location>
        <topology evidence="1">Single-pass membrane protein</topology>
    </subcellularLocation>
</comment>
<comment type="similarity">
    <text evidence="1">Belongs to the PsbE/PsbF family.</text>
</comment>
<sequence>MSGSTGERSFADIITSIRYWVIHSITIPSLFIAGWLFVSTGLAYDVFGSPRPNEYFTESRQGIPLITGRFDPLEQLDEFSRSF</sequence>
<proteinExistence type="inferred from homology"/>
<protein>
    <recommendedName>
        <fullName evidence="1">Cytochrome b559 subunit alpha</fullName>
    </recommendedName>
    <alternativeName>
        <fullName evidence="1">PSII reaction center subunit V</fullName>
    </alternativeName>
</protein>
<gene>
    <name evidence="1" type="primary">psbE</name>
    <name type="ordered locus">MoinCp038</name>
</gene>
<geneLocation type="chloroplast"/>
<keyword id="KW-0150">Chloroplast</keyword>
<keyword id="KW-0249">Electron transport</keyword>
<keyword id="KW-0349">Heme</keyword>
<keyword id="KW-0408">Iron</keyword>
<keyword id="KW-0472">Membrane</keyword>
<keyword id="KW-0479">Metal-binding</keyword>
<keyword id="KW-0602">Photosynthesis</keyword>
<keyword id="KW-0604">Photosystem II</keyword>
<keyword id="KW-0934">Plastid</keyword>
<keyword id="KW-0793">Thylakoid</keyword>
<keyword id="KW-0812">Transmembrane</keyword>
<keyword id="KW-1133">Transmembrane helix</keyword>
<keyword id="KW-0813">Transport</keyword>
<dbReference type="EMBL" id="DQ226511">
    <property type="protein sequence ID" value="ABB20973.1"/>
    <property type="molecule type" value="Genomic_DNA"/>
</dbReference>
<dbReference type="RefSeq" id="YP_762278.1">
    <property type="nucleotide sequence ID" value="NC_008359.1"/>
</dbReference>
<dbReference type="SMR" id="Q09X00"/>
<dbReference type="GeneID" id="4290550"/>
<dbReference type="GO" id="GO:0009535">
    <property type="term" value="C:chloroplast thylakoid membrane"/>
    <property type="evidence" value="ECO:0007669"/>
    <property type="project" value="UniProtKB-SubCell"/>
</dbReference>
<dbReference type="GO" id="GO:0009539">
    <property type="term" value="C:photosystem II reaction center"/>
    <property type="evidence" value="ECO:0007669"/>
    <property type="project" value="InterPro"/>
</dbReference>
<dbReference type="GO" id="GO:0009055">
    <property type="term" value="F:electron transfer activity"/>
    <property type="evidence" value="ECO:0007669"/>
    <property type="project" value="UniProtKB-UniRule"/>
</dbReference>
<dbReference type="GO" id="GO:0020037">
    <property type="term" value="F:heme binding"/>
    <property type="evidence" value="ECO:0007669"/>
    <property type="project" value="InterPro"/>
</dbReference>
<dbReference type="GO" id="GO:0005506">
    <property type="term" value="F:iron ion binding"/>
    <property type="evidence" value="ECO:0007669"/>
    <property type="project" value="UniProtKB-UniRule"/>
</dbReference>
<dbReference type="GO" id="GO:0009767">
    <property type="term" value="P:photosynthetic electron transport chain"/>
    <property type="evidence" value="ECO:0007669"/>
    <property type="project" value="InterPro"/>
</dbReference>
<dbReference type="Gene3D" id="1.20.5.860">
    <property type="entry name" value="Photosystem II cytochrome b559, alpha subunit"/>
    <property type="match status" value="1"/>
</dbReference>
<dbReference type="HAMAP" id="MF_00642">
    <property type="entry name" value="PSII_PsbE"/>
    <property type="match status" value="1"/>
</dbReference>
<dbReference type="InterPro" id="IPR006217">
    <property type="entry name" value="PSII_cyt_b559_asu"/>
</dbReference>
<dbReference type="InterPro" id="IPR037025">
    <property type="entry name" value="PSII_cyt_b559_asu_sf"/>
</dbReference>
<dbReference type="InterPro" id="IPR006216">
    <property type="entry name" value="PSII_cyt_b559_CS"/>
</dbReference>
<dbReference type="InterPro" id="IPR013081">
    <property type="entry name" value="PSII_cyt_b559_N"/>
</dbReference>
<dbReference type="InterPro" id="IPR013082">
    <property type="entry name" value="PSII_cytb559_asu_lum"/>
</dbReference>
<dbReference type="NCBIfam" id="TIGR01332">
    <property type="entry name" value="cyt_b559_alpha"/>
    <property type="match status" value="1"/>
</dbReference>
<dbReference type="PANTHER" id="PTHR33391">
    <property type="entry name" value="CYTOCHROME B559 SUBUNIT BETA-RELATED"/>
    <property type="match status" value="1"/>
</dbReference>
<dbReference type="PANTHER" id="PTHR33391:SF9">
    <property type="entry name" value="CYTOCHROME B559 SUBUNIT BETA-RELATED"/>
    <property type="match status" value="1"/>
</dbReference>
<dbReference type="Pfam" id="PF00283">
    <property type="entry name" value="Cytochrom_B559"/>
    <property type="match status" value="1"/>
</dbReference>
<dbReference type="Pfam" id="PF00284">
    <property type="entry name" value="Cytochrom_B559a"/>
    <property type="match status" value="1"/>
</dbReference>
<dbReference type="PIRSF" id="PIRSF000036">
    <property type="entry name" value="PsbE"/>
    <property type="match status" value="1"/>
</dbReference>
<dbReference type="SUPFAM" id="SSF161045">
    <property type="entry name" value="Cytochrome b559 subunits"/>
    <property type="match status" value="1"/>
</dbReference>
<dbReference type="PROSITE" id="PS00537">
    <property type="entry name" value="CYTOCHROME_B559"/>
    <property type="match status" value="1"/>
</dbReference>
<organism>
    <name type="scientific">Morus indica</name>
    <name type="common">Mulberry</name>
    <dbReference type="NCBI Taxonomy" id="248361"/>
    <lineage>
        <taxon>Eukaryota</taxon>
        <taxon>Viridiplantae</taxon>
        <taxon>Streptophyta</taxon>
        <taxon>Embryophyta</taxon>
        <taxon>Tracheophyta</taxon>
        <taxon>Spermatophyta</taxon>
        <taxon>Magnoliopsida</taxon>
        <taxon>eudicotyledons</taxon>
        <taxon>Gunneridae</taxon>
        <taxon>Pentapetalae</taxon>
        <taxon>rosids</taxon>
        <taxon>fabids</taxon>
        <taxon>Rosales</taxon>
        <taxon>Moraceae</taxon>
        <taxon>Moreae</taxon>
        <taxon>Morus</taxon>
    </lineage>
</organism>
<accession>Q09X00</accession>